<evidence type="ECO:0000255" key="1">
    <source>
        <dbReference type="HAMAP-Rule" id="MF_01334"/>
    </source>
</evidence>
<evidence type="ECO:0000305" key="2"/>
<protein>
    <recommendedName>
        <fullName evidence="1">Large ribosomal subunit protein bL25</fullName>
    </recommendedName>
    <alternativeName>
        <fullName evidence="2">50S ribosomal protein L25</fullName>
    </alternativeName>
    <alternativeName>
        <fullName evidence="1">General stress protein CTC</fullName>
    </alternativeName>
</protein>
<accession>B3QMQ8</accession>
<feature type="chain" id="PRO_1000142502" description="Large ribosomal subunit protein bL25">
    <location>
        <begin position="1"/>
        <end position="201"/>
    </location>
</feature>
<comment type="function">
    <text evidence="1">This is one of the proteins that binds to the 5S RNA in the ribosome where it forms part of the central protuberance.</text>
</comment>
<comment type="subunit">
    <text evidence="1">Part of the 50S ribosomal subunit; part of the 5S rRNA/L5/L18/L25 subcomplex. Contacts the 5S rRNA. Binds to the 5S rRNA independently of L5 and L18.</text>
</comment>
<comment type="similarity">
    <text evidence="1">Belongs to the bacterial ribosomal protein bL25 family. CTC subfamily.</text>
</comment>
<dbReference type="EMBL" id="CP001099">
    <property type="protein sequence ID" value="ACF11211.1"/>
    <property type="molecule type" value="Genomic_DNA"/>
</dbReference>
<dbReference type="RefSeq" id="WP_012502044.1">
    <property type="nucleotide sequence ID" value="NC_011027.1"/>
</dbReference>
<dbReference type="SMR" id="B3QMQ8"/>
<dbReference type="STRING" id="517417.Cpar_0795"/>
<dbReference type="KEGG" id="cpc:Cpar_0795"/>
<dbReference type="eggNOG" id="COG1825">
    <property type="taxonomic scope" value="Bacteria"/>
</dbReference>
<dbReference type="HOGENOM" id="CLU_075939_2_1_10"/>
<dbReference type="OrthoDB" id="9786489at2"/>
<dbReference type="Proteomes" id="UP000008811">
    <property type="component" value="Chromosome"/>
</dbReference>
<dbReference type="GO" id="GO:0022625">
    <property type="term" value="C:cytosolic large ribosomal subunit"/>
    <property type="evidence" value="ECO:0007669"/>
    <property type="project" value="TreeGrafter"/>
</dbReference>
<dbReference type="GO" id="GO:0008097">
    <property type="term" value="F:5S rRNA binding"/>
    <property type="evidence" value="ECO:0007669"/>
    <property type="project" value="InterPro"/>
</dbReference>
<dbReference type="GO" id="GO:0003735">
    <property type="term" value="F:structural constituent of ribosome"/>
    <property type="evidence" value="ECO:0007669"/>
    <property type="project" value="InterPro"/>
</dbReference>
<dbReference type="GO" id="GO:0006412">
    <property type="term" value="P:translation"/>
    <property type="evidence" value="ECO:0007669"/>
    <property type="project" value="UniProtKB-UniRule"/>
</dbReference>
<dbReference type="CDD" id="cd00495">
    <property type="entry name" value="Ribosomal_L25_TL5_CTC"/>
    <property type="match status" value="1"/>
</dbReference>
<dbReference type="Gene3D" id="2.170.120.20">
    <property type="entry name" value="Ribosomal protein L25, beta domain"/>
    <property type="match status" value="1"/>
</dbReference>
<dbReference type="Gene3D" id="2.40.240.10">
    <property type="entry name" value="Ribosomal Protein L25, Chain P"/>
    <property type="match status" value="1"/>
</dbReference>
<dbReference type="HAMAP" id="MF_01334">
    <property type="entry name" value="Ribosomal_bL25_CTC"/>
    <property type="match status" value="1"/>
</dbReference>
<dbReference type="InterPro" id="IPR020056">
    <property type="entry name" value="Rbsml_bL25/Gln-tRNA_synth_N"/>
</dbReference>
<dbReference type="InterPro" id="IPR011035">
    <property type="entry name" value="Ribosomal_bL25/Gln-tRNA_synth"/>
</dbReference>
<dbReference type="InterPro" id="IPR020057">
    <property type="entry name" value="Ribosomal_bL25_b-dom"/>
</dbReference>
<dbReference type="InterPro" id="IPR037121">
    <property type="entry name" value="Ribosomal_bL25_C"/>
</dbReference>
<dbReference type="InterPro" id="IPR001021">
    <property type="entry name" value="Ribosomal_bL25_long"/>
</dbReference>
<dbReference type="InterPro" id="IPR029751">
    <property type="entry name" value="Ribosomal_L25_dom"/>
</dbReference>
<dbReference type="InterPro" id="IPR020930">
    <property type="entry name" value="Ribosomal_uL5_bac-type"/>
</dbReference>
<dbReference type="NCBIfam" id="TIGR00731">
    <property type="entry name" value="bL25_bact_ctc"/>
    <property type="match status" value="1"/>
</dbReference>
<dbReference type="NCBIfam" id="NF004136">
    <property type="entry name" value="PRK05618.3-2"/>
    <property type="match status" value="1"/>
</dbReference>
<dbReference type="PANTHER" id="PTHR33284">
    <property type="entry name" value="RIBOSOMAL PROTEIN L25/GLN-TRNA SYNTHETASE, ANTI-CODON-BINDING DOMAIN-CONTAINING PROTEIN"/>
    <property type="match status" value="1"/>
</dbReference>
<dbReference type="PANTHER" id="PTHR33284:SF1">
    <property type="entry name" value="RIBOSOMAL PROTEIN L25_GLN-TRNA SYNTHETASE, ANTI-CODON-BINDING DOMAIN-CONTAINING PROTEIN"/>
    <property type="match status" value="1"/>
</dbReference>
<dbReference type="Pfam" id="PF01386">
    <property type="entry name" value="Ribosomal_L25p"/>
    <property type="match status" value="1"/>
</dbReference>
<dbReference type="Pfam" id="PF14693">
    <property type="entry name" value="Ribosomal_TL5_C"/>
    <property type="match status" value="1"/>
</dbReference>
<dbReference type="SUPFAM" id="SSF50715">
    <property type="entry name" value="Ribosomal protein L25-like"/>
    <property type="match status" value="1"/>
</dbReference>
<name>RL25_CHLP8</name>
<organism>
    <name type="scientific">Chlorobaculum parvum (strain DSM 263 / NCIMB 8327)</name>
    <name type="common">Chlorobium vibrioforme subsp. thiosulfatophilum</name>
    <dbReference type="NCBI Taxonomy" id="517417"/>
    <lineage>
        <taxon>Bacteria</taxon>
        <taxon>Pseudomonadati</taxon>
        <taxon>Chlorobiota</taxon>
        <taxon>Chlorobiia</taxon>
        <taxon>Chlorobiales</taxon>
        <taxon>Chlorobiaceae</taxon>
        <taxon>Chlorobaculum</taxon>
    </lineage>
</organism>
<proteinExistence type="inferred from homology"/>
<reference key="1">
    <citation type="submission" date="2008-06" db="EMBL/GenBank/DDBJ databases">
        <title>Complete sequence of Chlorobaculum parvum NCIB 8327.</title>
        <authorList>
            <consortium name="US DOE Joint Genome Institute"/>
            <person name="Lucas S."/>
            <person name="Copeland A."/>
            <person name="Lapidus A."/>
            <person name="Glavina del Rio T."/>
            <person name="Dalin E."/>
            <person name="Tice H."/>
            <person name="Bruce D."/>
            <person name="Goodwin L."/>
            <person name="Pitluck S."/>
            <person name="Schmutz J."/>
            <person name="Larimer F."/>
            <person name="Land M."/>
            <person name="Hauser L."/>
            <person name="Kyrpides N."/>
            <person name="Mikhailova N."/>
            <person name="Zhao F."/>
            <person name="Li T."/>
            <person name="Liu Z."/>
            <person name="Overmann J."/>
            <person name="Bryant D.A."/>
            <person name="Richardson P."/>
        </authorList>
    </citation>
    <scope>NUCLEOTIDE SEQUENCE [LARGE SCALE GENOMIC DNA]</scope>
    <source>
        <strain>DSM 263 / NCIMB 8327</strain>
    </source>
</reference>
<keyword id="KW-0687">Ribonucleoprotein</keyword>
<keyword id="KW-0689">Ribosomal protein</keyword>
<keyword id="KW-0694">RNA-binding</keyword>
<keyword id="KW-0699">rRNA-binding</keyword>
<gene>
    <name evidence="1" type="primary">rplY</name>
    <name evidence="1" type="synonym">ctc</name>
    <name type="ordered locus">Cpar_0795</name>
</gene>
<sequence>METRALSVNLREVKKNGAAKLRQQGMVPAVVYHKGEETVAISVDEIALDKLVHSAESHLIDLQYPDGKSVRAFIKDLQFDPVTDRVIHADFKRFTADEVVEMEVPIHVEGEAVGVKIGGGKLQINMHTLTLKGKPANMPEHFTIDVSALETGHSLHISDLQATVPAGTIEIIGDADAAIVSVAAPRKEAEAEAEEETTEEA</sequence>